<sequence>MGTFRRRRRFLLAALVTFALLHLFSASSIVSADGRWIGQRTGSDLPGGFIRSNKRFGGPGSSPPTCRSKCGKCQPCKPVHVPIQPGLSMPLEYYPEAWRCKCGNKLFMP</sequence>
<comment type="function">
    <text evidence="2 3 4 5">Acts primarily as positive regulator of inflorescence growth. Endodermal expression is sufficient for proper inflorescence architecture (PubMed:22474391). Redundantly involved with EPFL6 in procambial development regulation. Controls stomatal patterning. Mediates stomatal development inhibition. TMM (AC Q9SSD1) functions to dampen or block CLL2 signaling. Acts as a growth-regulatory ligand for ERECTA family receptors.</text>
</comment>
<comment type="subunit">
    <text evidence="4">Interacts with ERECTA.</text>
</comment>
<comment type="subcellular location">
    <subcellularLocation>
        <location evidence="9">Secreted</location>
    </subcellularLocation>
</comment>
<comment type="tissue specificity">
    <text evidence="3 4">Expressed at the base of the apical meristem at 3 days after germination. Not detected in the hypocotyl. Expressed in developing stems soon after bolting, in inflorescence stems and in young siliques.</text>
</comment>
<comment type="disruption phenotype">
    <text evidence="3 4">No visible phenotype. Chal and cll2 double mutants are defective in growth, with a short stature, shortened pedicells and compact inflorescence.</text>
</comment>
<comment type="similarity">
    <text evidence="9">Belongs to the plant cysteine rich small secretory peptide family. Epidermal patterning factor subfamily.</text>
</comment>
<gene>
    <name evidence="6" type="primary">EPFL4</name>
    <name evidence="7" type="synonym">CLL2</name>
    <name evidence="10" type="ordered locus">At4g14723</name>
    <name type="ORF">FCAALL</name>
</gene>
<protein>
    <recommendedName>
        <fullName evidence="6">EPIDERMAL PATTERNING FACTOR-like protein 4</fullName>
        <shortName>EPF-like protein 4</shortName>
    </recommendedName>
    <component>
        <recommendedName>
            <fullName evidence="7">CHALLAH-LIKE2</fullName>
        </recommendedName>
    </component>
</protein>
<evidence type="ECO:0000255" key="1"/>
<evidence type="ECO:0000269" key="2">
    <source>
    </source>
</evidence>
<evidence type="ECO:0000269" key="3">
    <source>
    </source>
</evidence>
<evidence type="ECO:0000269" key="4">
    <source>
    </source>
</evidence>
<evidence type="ECO:0000269" key="5">
    <source>
    </source>
</evidence>
<evidence type="ECO:0000303" key="6">
    <source>
    </source>
</evidence>
<evidence type="ECO:0000303" key="7">
    <source>
    </source>
</evidence>
<evidence type="ECO:0000303" key="8">
    <source>
    </source>
</evidence>
<evidence type="ECO:0000305" key="9"/>
<evidence type="ECO:0000312" key="10">
    <source>
        <dbReference type="Araport" id="AT4G14723"/>
    </source>
</evidence>
<reference key="1">
    <citation type="journal article" date="1998" name="Nature">
        <title>Analysis of 1.9 Mb of contiguous sequence from chromosome 4 of Arabidopsis thaliana.</title>
        <authorList>
            <person name="Bevan M."/>
            <person name="Bancroft I."/>
            <person name="Bent E."/>
            <person name="Love K."/>
            <person name="Goodman H.M."/>
            <person name="Dean C."/>
            <person name="Bergkamp R."/>
            <person name="Dirkse W."/>
            <person name="van Staveren M."/>
            <person name="Stiekema W."/>
            <person name="Drost L."/>
            <person name="Ridley P."/>
            <person name="Hudson S.-A."/>
            <person name="Patel K."/>
            <person name="Murphy G."/>
            <person name="Piffanelli P."/>
            <person name="Wedler H."/>
            <person name="Wedler E."/>
            <person name="Wambutt R."/>
            <person name="Weitzenegger T."/>
            <person name="Pohl T."/>
            <person name="Terryn N."/>
            <person name="Gielen J."/>
            <person name="Villarroel R."/>
            <person name="De Clercq R."/>
            <person name="van Montagu M."/>
            <person name="Lecharny A."/>
            <person name="Aubourg S."/>
            <person name="Gy I."/>
            <person name="Kreis M."/>
            <person name="Lao N."/>
            <person name="Kavanagh T."/>
            <person name="Hempel S."/>
            <person name="Kotter P."/>
            <person name="Entian K.-D."/>
            <person name="Rieger M."/>
            <person name="Schaefer M."/>
            <person name="Funk B."/>
            <person name="Mueller-Auer S."/>
            <person name="Silvey M."/>
            <person name="James R."/>
            <person name="Monfort A."/>
            <person name="Pons A."/>
            <person name="Puigdomenech P."/>
            <person name="Douka A."/>
            <person name="Voukelatou E."/>
            <person name="Milioni D."/>
            <person name="Hatzopoulos P."/>
            <person name="Piravandi E."/>
            <person name="Obermaier B."/>
            <person name="Hilbert H."/>
            <person name="Duesterhoeft A."/>
            <person name="Moores T."/>
            <person name="Jones J.D.G."/>
            <person name="Eneva T."/>
            <person name="Palme K."/>
            <person name="Benes V."/>
            <person name="Rechmann S."/>
            <person name="Ansorge W."/>
            <person name="Cooke R."/>
            <person name="Berger C."/>
            <person name="Delseny M."/>
            <person name="Voet M."/>
            <person name="Volckaert G."/>
            <person name="Mewes H.-W."/>
            <person name="Klosterman S."/>
            <person name="Schueller C."/>
            <person name="Chalwatzis N."/>
        </authorList>
    </citation>
    <scope>NUCLEOTIDE SEQUENCE [LARGE SCALE GENOMIC DNA]</scope>
    <source>
        <strain>cv. Columbia</strain>
    </source>
</reference>
<reference key="2">
    <citation type="journal article" date="1999" name="Nature">
        <title>Sequence and analysis of chromosome 4 of the plant Arabidopsis thaliana.</title>
        <authorList>
            <person name="Mayer K.F.X."/>
            <person name="Schueller C."/>
            <person name="Wambutt R."/>
            <person name="Murphy G."/>
            <person name="Volckaert G."/>
            <person name="Pohl T."/>
            <person name="Duesterhoeft A."/>
            <person name="Stiekema W."/>
            <person name="Entian K.-D."/>
            <person name="Terryn N."/>
            <person name="Harris B."/>
            <person name="Ansorge W."/>
            <person name="Brandt P."/>
            <person name="Grivell L.A."/>
            <person name="Rieger M."/>
            <person name="Weichselgartner M."/>
            <person name="de Simone V."/>
            <person name="Obermaier B."/>
            <person name="Mache R."/>
            <person name="Mueller M."/>
            <person name="Kreis M."/>
            <person name="Delseny M."/>
            <person name="Puigdomenech P."/>
            <person name="Watson M."/>
            <person name="Schmidtheini T."/>
            <person name="Reichert B."/>
            <person name="Portetelle D."/>
            <person name="Perez-Alonso M."/>
            <person name="Boutry M."/>
            <person name="Bancroft I."/>
            <person name="Vos P."/>
            <person name="Hoheisel J."/>
            <person name="Zimmermann W."/>
            <person name="Wedler H."/>
            <person name="Ridley P."/>
            <person name="Langham S.-A."/>
            <person name="McCullagh B."/>
            <person name="Bilham L."/>
            <person name="Robben J."/>
            <person name="van der Schueren J."/>
            <person name="Grymonprez B."/>
            <person name="Chuang Y.-J."/>
            <person name="Vandenbussche F."/>
            <person name="Braeken M."/>
            <person name="Weltjens I."/>
            <person name="Voet M."/>
            <person name="Bastiaens I."/>
            <person name="Aert R."/>
            <person name="Defoor E."/>
            <person name="Weitzenegger T."/>
            <person name="Bothe G."/>
            <person name="Ramsperger U."/>
            <person name="Hilbert H."/>
            <person name="Braun M."/>
            <person name="Holzer E."/>
            <person name="Brandt A."/>
            <person name="Peters S."/>
            <person name="van Staveren M."/>
            <person name="Dirkse W."/>
            <person name="Mooijman P."/>
            <person name="Klein Lankhorst R."/>
            <person name="Rose M."/>
            <person name="Hauf J."/>
            <person name="Koetter P."/>
            <person name="Berneiser S."/>
            <person name="Hempel S."/>
            <person name="Feldpausch M."/>
            <person name="Lamberth S."/>
            <person name="Van den Daele H."/>
            <person name="De Keyser A."/>
            <person name="Buysshaert C."/>
            <person name="Gielen J."/>
            <person name="Villarroel R."/>
            <person name="De Clercq R."/>
            <person name="van Montagu M."/>
            <person name="Rogers J."/>
            <person name="Cronin A."/>
            <person name="Quail M.A."/>
            <person name="Bray-Allen S."/>
            <person name="Clark L."/>
            <person name="Doggett J."/>
            <person name="Hall S."/>
            <person name="Kay M."/>
            <person name="Lennard N."/>
            <person name="McLay K."/>
            <person name="Mayes R."/>
            <person name="Pettett A."/>
            <person name="Rajandream M.A."/>
            <person name="Lyne M."/>
            <person name="Benes V."/>
            <person name="Rechmann S."/>
            <person name="Borkova D."/>
            <person name="Bloecker H."/>
            <person name="Scharfe M."/>
            <person name="Grimm M."/>
            <person name="Loehnert T.-H."/>
            <person name="Dose S."/>
            <person name="de Haan M."/>
            <person name="Maarse A.C."/>
            <person name="Schaefer M."/>
            <person name="Mueller-Auer S."/>
            <person name="Gabel C."/>
            <person name="Fuchs M."/>
            <person name="Fartmann B."/>
            <person name="Granderath K."/>
            <person name="Dauner D."/>
            <person name="Herzl A."/>
            <person name="Neumann S."/>
            <person name="Argiriou A."/>
            <person name="Vitale D."/>
            <person name="Liguori R."/>
            <person name="Piravandi E."/>
            <person name="Massenet O."/>
            <person name="Quigley F."/>
            <person name="Clabauld G."/>
            <person name="Muendlein A."/>
            <person name="Felber R."/>
            <person name="Schnabl S."/>
            <person name="Hiller R."/>
            <person name="Schmidt W."/>
            <person name="Lecharny A."/>
            <person name="Aubourg S."/>
            <person name="Chefdor F."/>
            <person name="Cooke R."/>
            <person name="Berger C."/>
            <person name="Monfort A."/>
            <person name="Casacuberta E."/>
            <person name="Gibbons T."/>
            <person name="Weber N."/>
            <person name="Vandenbol M."/>
            <person name="Bargues M."/>
            <person name="Terol J."/>
            <person name="Torres A."/>
            <person name="Perez-Perez A."/>
            <person name="Purnelle B."/>
            <person name="Bent E."/>
            <person name="Johnson S."/>
            <person name="Tacon D."/>
            <person name="Jesse T."/>
            <person name="Heijnen L."/>
            <person name="Schwarz S."/>
            <person name="Scholler P."/>
            <person name="Heber S."/>
            <person name="Francs P."/>
            <person name="Bielke C."/>
            <person name="Frishman D."/>
            <person name="Haase D."/>
            <person name="Lemcke K."/>
            <person name="Mewes H.-W."/>
            <person name="Stocker S."/>
            <person name="Zaccaria P."/>
            <person name="Bevan M."/>
            <person name="Wilson R.K."/>
            <person name="de la Bastide M."/>
            <person name="Habermann K."/>
            <person name="Parnell L."/>
            <person name="Dedhia N."/>
            <person name="Gnoj L."/>
            <person name="Schutz K."/>
            <person name="Huang E."/>
            <person name="Spiegel L."/>
            <person name="Sekhon M."/>
            <person name="Murray J."/>
            <person name="Sheet P."/>
            <person name="Cordes M."/>
            <person name="Abu-Threideh J."/>
            <person name="Stoneking T."/>
            <person name="Kalicki J."/>
            <person name="Graves T."/>
            <person name="Harmon G."/>
            <person name="Edwards J."/>
            <person name="Latreille P."/>
            <person name="Courtney L."/>
            <person name="Cloud J."/>
            <person name="Abbott A."/>
            <person name="Scott K."/>
            <person name="Johnson D."/>
            <person name="Minx P."/>
            <person name="Bentley D."/>
            <person name="Fulton B."/>
            <person name="Miller N."/>
            <person name="Greco T."/>
            <person name="Kemp K."/>
            <person name="Kramer J."/>
            <person name="Fulton L."/>
            <person name="Mardis E."/>
            <person name="Dante M."/>
            <person name="Pepin K."/>
            <person name="Hillier L.W."/>
            <person name="Nelson J."/>
            <person name="Spieth J."/>
            <person name="Ryan E."/>
            <person name="Andrews S."/>
            <person name="Geisel C."/>
            <person name="Layman D."/>
            <person name="Du H."/>
            <person name="Ali J."/>
            <person name="Berghoff A."/>
            <person name="Jones K."/>
            <person name="Drone K."/>
            <person name="Cotton M."/>
            <person name="Joshu C."/>
            <person name="Antonoiu B."/>
            <person name="Zidanic M."/>
            <person name="Strong C."/>
            <person name="Sun H."/>
            <person name="Lamar B."/>
            <person name="Yordan C."/>
            <person name="Ma P."/>
            <person name="Zhong J."/>
            <person name="Preston R."/>
            <person name="Vil D."/>
            <person name="Shekher M."/>
            <person name="Matero A."/>
            <person name="Shah R."/>
            <person name="Swaby I.K."/>
            <person name="O'Shaughnessy A."/>
            <person name="Rodriguez M."/>
            <person name="Hoffman J."/>
            <person name="Till S."/>
            <person name="Granat S."/>
            <person name="Shohdy N."/>
            <person name="Hasegawa A."/>
            <person name="Hameed A."/>
            <person name="Lodhi M."/>
            <person name="Johnson A."/>
            <person name="Chen E."/>
            <person name="Marra M.A."/>
            <person name="Martienssen R."/>
            <person name="McCombie W.R."/>
        </authorList>
    </citation>
    <scope>NUCLEOTIDE SEQUENCE [LARGE SCALE GENOMIC DNA]</scope>
    <source>
        <strain>cv. Columbia</strain>
    </source>
</reference>
<reference key="3">
    <citation type="journal article" date="2017" name="Plant J.">
        <title>Araport11: a complete reannotation of the Arabidopsis thaliana reference genome.</title>
        <authorList>
            <person name="Cheng C.Y."/>
            <person name="Krishnakumar V."/>
            <person name="Chan A.P."/>
            <person name="Thibaud-Nissen F."/>
            <person name="Schobel S."/>
            <person name="Town C.D."/>
        </authorList>
    </citation>
    <scope>GENOME REANNOTATION</scope>
    <source>
        <strain>cv. Columbia</strain>
    </source>
</reference>
<reference key="4">
    <citation type="journal article" date="2006" name="Plant Biotechnol. J.">
        <title>Simultaneous high-throughput recombinational cloning of open reading frames in closed and open configurations.</title>
        <authorList>
            <person name="Underwood B.A."/>
            <person name="Vanderhaeghen R."/>
            <person name="Whitford R."/>
            <person name="Town C.D."/>
            <person name="Hilson P."/>
        </authorList>
    </citation>
    <scope>NUCLEOTIDE SEQUENCE [LARGE SCALE MRNA]</scope>
    <source>
        <strain>cv. Columbia</strain>
    </source>
</reference>
<reference key="5">
    <citation type="journal article" date="2009" name="Plant Cell Physiol.">
        <title>Epidermal cell density is autoregulated via a secretory peptide, EPIDERMAL PATTERNING FACTOR 2 in Arabidopsis leaves.</title>
        <authorList>
            <person name="Hara K."/>
            <person name="Yokoo T."/>
            <person name="Kajita R."/>
            <person name="Onishi T."/>
            <person name="Yahata S."/>
            <person name="Peterson K.M."/>
            <person name="Torii K.U."/>
            <person name="Kakimoto T."/>
        </authorList>
    </citation>
    <scope>FUNCTION</scope>
    <scope>GENE FAMILY</scope>
    <scope>NOMENCLATURE</scope>
</reference>
<reference key="6">
    <citation type="journal article" date="2011" name="Nat. Commun.">
        <title>The NMR structure of stomagen reveals the basis of stomatal density regulation by plant peptide hormones.</title>
        <authorList>
            <person name="Ohki S."/>
            <person name="Takeuchi M."/>
            <person name="Mori M."/>
        </authorList>
    </citation>
    <scope>3D-STRUCTURE MODELING</scope>
    <scope>DISULFIDE BOND</scope>
</reference>
<reference key="7">
    <citation type="journal article" date="2011" name="Plant Cell">
        <title>Generation of signaling specificity in Arabidopsis by spatially restricted buffering of ligand-receptor interactions.</title>
        <authorList>
            <person name="Abrash E.B."/>
            <person name="Davies K.A."/>
            <person name="Bergmann D.C."/>
        </authorList>
    </citation>
    <scope>FUNCTION</scope>
    <scope>DISRUPTION PHENOTYPE</scope>
    <scope>TISSUE SPECIFICITY</scope>
</reference>
<reference key="8">
    <citation type="journal article" date="2012" name="Proc. Natl. Acad. Sci. U.S.A.">
        <title>Regulation of inflorescence architecture by intertissue layer ligand-receptor communication between endodermis and phloem.</title>
        <authorList>
            <person name="Uchida N."/>
            <person name="Lee J.S."/>
            <person name="Horst R.J."/>
            <person name="Lai H.H."/>
            <person name="Kajita R."/>
            <person name="Kakimoto T."/>
            <person name="Tasaka M."/>
            <person name="Torii K.U."/>
        </authorList>
    </citation>
    <scope>FUNCTION</scope>
    <scope>TISSUE SPECIFICITY</scope>
    <scope>DISRUPTION PHENOTYPE</scope>
    <scope>INTERACTION WITH ERECTA</scope>
</reference>
<reference key="9">
    <citation type="journal article" date="2013" name="J. Exp. Bot.">
        <title>Regulation of plant vascular stem cells by endodermis-derived EPFL-family peptide hormones and phloem-expressed ERECTA-family receptor kinases.</title>
        <authorList>
            <person name="Uchida N."/>
            <person name="Tasaka M."/>
        </authorList>
    </citation>
    <scope>FUNCTION</scope>
</reference>
<name>EPFL4_ARATH</name>
<keyword id="KW-0002">3D-structure</keyword>
<keyword id="KW-0217">Developmental protein</keyword>
<keyword id="KW-1015">Disulfide bond</keyword>
<keyword id="KW-1185">Reference proteome</keyword>
<keyword id="KW-0964">Secreted</keyword>
<keyword id="KW-0732">Signal</keyword>
<organism>
    <name type="scientific">Arabidopsis thaliana</name>
    <name type="common">Mouse-ear cress</name>
    <dbReference type="NCBI Taxonomy" id="3702"/>
    <lineage>
        <taxon>Eukaryota</taxon>
        <taxon>Viridiplantae</taxon>
        <taxon>Streptophyta</taxon>
        <taxon>Embryophyta</taxon>
        <taxon>Tracheophyta</taxon>
        <taxon>Spermatophyta</taxon>
        <taxon>Magnoliopsida</taxon>
        <taxon>eudicotyledons</taxon>
        <taxon>Gunneridae</taxon>
        <taxon>Pentapetalae</taxon>
        <taxon>rosids</taxon>
        <taxon>malvids</taxon>
        <taxon>Brassicales</taxon>
        <taxon>Brassicaceae</taxon>
        <taxon>Camelineae</taxon>
        <taxon>Arabidopsis</taxon>
    </lineage>
</organism>
<feature type="signal peptide" evidence="1">
    <location>
        <begin position="1"/>
        <end position="26"/>
    </location>
</feature>
<feature type="chain" id="PRO_0000392502" description="EPIDERMAL PATTERNING FACTOR-like protein 4">
    <location>
        <begin position="27"/>
        <end position="109"/>
    </location>
</feature>
<feature type="chain" id="PRO_0000430510" description="CHALLAH-LIKE2" evidence="8">
    <location>
        <begin position="59"/>
        <end position="109"/>
    </location>
</feature>
<feature type="disulfide bond" evidence="8">
    <location>
        <begin position="66"/>
        <end position="100"/>
    </location>
</feature>
<feature type="disulfide bond" evidence="8">
    <location>
        <begin position="70"/>
        <end position="76"/>
    </location>
</feature>
<feature type="disulfide bond" evidence="8">
    <location>
        <begin position="73"/>
        <end position="102"/>
    </location>
</feature>
<proteinExistence type="evidence at protein level"/>
<accession>Q2V3I3</accession>
<dbReference type="EMBL" id="Z97336">
    <property type="status" value="NOT_ANNOTATED_CDS"/>
    <property type="molecule type" value="Genomic_DNA"/>
</dbReference>
<dbReference type="EMBL" id="Z97337">
    <property type="status" value="NOT_ANNOTATED_CDS"/>
    <property type="molecule type" value="Genomic_DNA"/>
</dbReference>
<dbReference type="EMBL" id="AL161539">
    <property type="status" value="NOT_ANNOTATED_CDS"/>
    <property type="molecule type" value="Genomic_DNA"/>
</dbReference>
<dbReference type="EMBL" id="CP002687">
    <property type="protein sequence ID" value="AEE83488.1"/>
    <property type="molecule type" value="Genomic_DNA"/>
</dbReference>
<dbReference type="EMBL" id="DQ487600">
    <property type="protein sequence ID" value="ABF59246.1"/>
    <property type="molecule type" value="mRNA"/>
</dbReference>
<dbReference type="RefSeq" id="NP_001031641.1">
    <property type="nucleotide sequence ID" value="NM_001036564.4"/>
</dbReference>
<dbReference type="PDB" id="5XKN">
    <property type="method" value="X-ray"/>
    <property type="resolution" value="3.65 A"/>
    <property type="chains" value="E/F=59-109"/>
</dbReference>
<dbReference type="PDBsum" id="5XKN"/>
<dbReference type="SMR" id="Q2V3I3"/>
<dbReference type="STRING" id="3702.Q2V3I3"/>
<dbReference type="PaxDb" id="3702-AT4G14723.1"/>
<dbReference type="EnsemblPlants" id="AT4G14723.1">
    <property type="protein sequence ID" value="AT4G14723.1"/>
    <property type="gene ID" value="AT4G14723"/>
</dbReference>
<dbReference type="GeneID" id="3769880"/>
<dbReference type="Gramene" id="AT4G14723.1">
    <property type="protein sequence ID" value="AT4G14723.1"/>
    <property type="gene ID" value="AT4G14723"/>
</dbReference>
<dbReference type="KEGG" id="ath:AT4G14723"/>
<dbReference type="Araport" id="AT4G14723"/>
<dbReference type="TAIR" id="AT4G14723">
    <property type="gene designation" value="CLL2"/>
</dbReference>
<dbReference type="eggNOG" id="ENOG502S3SX">
    <property type="taxonomic scope" value="Eukaryota"/>
</dbReference>
<dbReference type="HOGENOM" id="CLU_135272_3_3_1"/>
<dbReference type="InParanoid" id="Q2V3I3"/>
<dbReference type="OMA" id="WIGQRTG"/>
<dbReference type="PhylomeDB" id="Q2V3I3"/>
<dbReference type="PRO" id="PR:Q2V3I3"/>
<dbReference type="Proteomes" id="UP000006548">
    <property type="component" value="Chromosome 4"/>
</dbReference>
<dbReference type="ExpressionAtlas" id="Q2V3I3">
    <property type="expression patterns" value="baseline and differential"/>
</dbReference>
<dbReference type="GO" id="GO:0005576">
    <property type="term" value="C:extracellular region"/>
    <property type="evidence" value="ECO:0007669"/>
    <property type="project" value="UniProtKB-SubCell"/>
</dbReference>
<dbReference type="GO" id="GO:0010052">
    <property type="term" value="P:guard cell differentiation"/>
    <property type="evidence" value="ECO:0000315"/>
    <property type="project" value="UniProtKB"/>
</dbReference>
<dbReference type="GO" id="GO:0010374">
    <property type="term" value="P:stomatal complex development"/>
    <property type="evidence" value="ECO:0000315"/>
    <property type="project" value="UniProtKB"/>
</dbReference>
<dbReference type="InterPro" id="IPR039455">
    <property type="entry name" value="EPFL"/>
</dbReference>
<dbReference type="PANTHER" id="PTHR33109">
    <property type="entry name" value="EPIDERMAL PATTERNING FACTOR-LIKE PROTEIN 4"/>
    <property type="match status" value="1"/>
</dbReference>
<dbReference type="PANTHER" id="PTHR33109:SF55">
    <property type="entry name" value="EPIDERMAL PATTERNING FACTOR-LIKE PROTEIN 4-RELATED"/>
    <property type="match status" value="1"/>
</dbReference>
<dbReference type="Pfam" id="PF17181">
    <property type="entry name" value="EPF"/>
    <property type="match status" value="1"/>
</dbReference>